<keyword id="KW-0687">Ribonucleoprotein</keyword>
<keyword id="KW-0689">Ribosomal protein</keyword>
<keyword id="KW-0694">RNA-binding</keyword>
<keyword id="KW-0699">rRNA-binding</keyword>
<accession>B2UTS9</accession>
<evidence type="ECO:0000255" key="1">
    <source>
        <dbReference type="HAMAP-Rule" id="MF_00501"/>
    </source>
</evidence>
<evidence type="ECO:0000305" key="2"/>
<dbReference type="EMBL" id="CP001072">
    <property type="protein sequence ID" value="ACD48261.1"/>
    <property type="molecule type" value="Genomic_DNA"/>
</dbReference>
<dbReference type="RefSeq" id="WP_000715278.1">
    <property type="nucleotide sequence ID" value="NC_010698.2"/>
</dbReference>
<dbReference type="SMR" id="B2UTS9"/>
<dbReference type="GeneID" id="93236900"/>
<dbReference type="KEGG" id="hps:HPSH_04130"/>
<dbReference type="HOGENOM" id="CLU_114306_4_0_7"/>
<dbReference type="GO" id="GO:1990904">
    <property type="term" value="C:ribonucleoprotein complex"/>
    <property type="evidence" value="ECO:0007669"/>
    <property type="project" value="UniProtKB-KW"/>
</dbReference>
<dbReference type="GO" id="GO:0005840">
    <property type="term" value="C:ribosome"/>
    <property type="evidence" value="ECO:0007669"/>
    <property type="project" value="UniProtKB-KW"/>
</dbReference>
<dbReference type="GO" id="GO:0019843">
    <property type="term" value="F:rRNA binding"/>
    <property type="evidence" value="ECO:0007669"/>
    <property type="project" value="UniProtKB-KW"/>
</dbReference>
<dbReference type="GO" id="GO:0003735">
    <property type="term" value="F:structural constituent of ribosome"/>
    <property type="evidence" value="ECO:0007669"/>
    <property type="project" value="InterPro"/>
</dbReference>
<dbReference type="GO" id="GO:0006412">
    <property type="term" value="P:translation"/>
    <property type="evidence" value="ECO:0007669"/>
    <property type="project" value="UniProtKB-UniRule"/>
</dbReference>
<dbReference type="Gene3D" id="4.10.830.30">
    <property type="entry name" value="Ribosomal protein L31"/>
    <property type="match status" value="1"/>
</dbReference>
<dbReference type="HAMAP" id="MF_00501">
    <property type="entry name" value="Ribosomal_bL31_1"/>
    <property type="match status" value="1"/>
</dbReference>
<dbReference type="InterPro" id="IPR034704">
    <property type="entry name" value="Ribosomal_bL28/bL31-like_sf"/>
</dbReference>
<dbReference type="InterPro" id="IPR002150">
    <property type="entry name" value="Ribosomal_bL31"/>
</dbReference>
<dbReference type="InterPro" id="IPR027491">
    <property type="entry name" value="Ribosomal_bL31_A"/>
</dbReference>
<dbReference type="InterPro" id="IPR042105">
    <property type="entry name" value="Ribosomal_bL31_sf"/>
</dbReference>
<dbReference type="NCBIfam" id="TIGR00105">
    <property type="entry name" value="L31"/>
    <property type="match status" value="1"/>
</dbReference>
<dbReference type="NCBIfam" id="NF000612">
    <property type="entry name" value="PRK00019.1"/>
    <property type="match status" value="1"/>
</dbReference>
<dbReference type="NCBIfam" id="NF001809">
    <property type="entry name" value="PRK00528.1"/>
    <property type="match status" value="1"/>
</dbReference>
<dbReference type="PANTHER" id="PTHR33280">
    <property type="entry name" value="50S RIBOSOMAL PROTEIN L31, CHLOROPLASTIC"/>
    <property type="match status" value="1"/>
</dbReference>
<dbReference type="PANTHER" id="PTHR33280:SF6">
    <property type="entry name" value="LARGE RIBOSOMAL SUBUNIT PROTEIN BL31A"/>
    <property type="match status" value="1"/>
</dbReference>
<dbReference type="Pfam" id="PF01197">
    <property type="entry name" value="Ribosomal_L31"/>
    <property type="match status" value="1"/>
</dbReference>
<dbReference type="PRINTS" id="PR01249">
    <property type="entry name" value="RIBOSOMALL31"/>
</dbReference>
<dbReference type="SUPFAM" id="SSF143800">
    <property type="entry name" value="L28p-like"/>
    <property type="match status" value="1"/>
</dbReference>
<dbReference type="PROSITE" id="PS01143">
    <property type="entry name" value="RIBOSOMAL_L31"/>
    <property type="match status" value="1"/>
</dbReference>
<reference key="1">
    <citation type="submission" date="2008-05" db="EMBL/GenBank/DDBJ databases">
        <title>Genome sequence of Helicobacter pylori from the remote Amazon: traces of Asian ancestry of the first Americans.</title>
        <authorList>
            <person name="Kersulyte D."/>
            <person name="Kalia A."/>
            <person name="Gilman R.H."/>
            <person name="Berg D.E."/>
        </authorList>
    </citation>
    <scope>NUCLEOTIDE SEQUENCE [LARGE SCALE GENOMIC DNA]</scope>
    <source>
        <strain>Shi470</strain>
    </source>
</reference>
<organism>
    <name type="scientific">Helicobacter pylori (strain Shi470)</name>
    <dbReference type="NCBI Taxonomy" id="512562"/>
    <lineage>
        <taxon>Bacteria</taxon>
        <taxon>Pseudomonadati</taxon>
        <taxon>Campylobacterota</taxon>
        <taxon>Epsilonproteobacteria</taxon>
        <taxon>Campylobacterales</taxon>
        <taxon>Helicobacteraceae</taxon>
        <taxon>Helicobacter</taxon>
    </lineage>
</organism>
<name>RL31_HELPS</name>
<sequence>MKKGIHPEYIPCKVTCVTSGKEIEVLSTKPEMRIDISSFCHPFYTGSDKIADTAGRVEKFKQRYNLK</sequence>
<protein>
    <recommendedName>
        <fullName evidence="1">Large ribosomal subunit protein bL31</fullName>
    </recommendedName>
    <alternativeName>
        <fullName evidence="2">50S ribosomal protein L31</fullName>
    </alternativeName>
</protein>
<feature type="chain" id="PRO_1000126646" description="Large ribosomal subunit protein bL31">
    <location>
        <begin position="1"/>
        <end position="67"/>
    </location>
</feature>
<gene>
    <name evidence="1" type="primary">rpmE</name>
    <name type="ordered locus">HPSH_04130</name>
</gene>
<comment type="function">
    <text evidence="1">Binds the 23S rRNA.</text>
</comment>
<comment type="subunit">
    <text evidence="1">Part of the 50S ribosomal subunit.</text>
</comment>
<comment type="similarity">
    <text evidence="1">Belongs to the bacterial ribosomal protein bL31 family. Type A subfamily.</text>
</comment>
<proteinExistence type="inferred from homology"/>